<dbReference type="EMBL" id="CP001014">
    <property type="protein sequence ID" value="ACB39633.1"/>
    <property type="molecule type" value="Genomic_DNA"/>
</dbReference>
<dbReference type="RefSeq" id="WP_012350053.1">
    <property type="nucleotide sequence ID" value="NC_010525.1"/>
</dbReference>
<dbReference type="SMR" id="B1YCX0"/>
<dbReference type="STRING" id="444157.Tneu_0694"/>
<dbReference type="GeneID" id="6165484"/>
<dbReference type="KEGG" id="tne:Tneu_0694"/>
<dbReference type="eggNOG" id="arCOG01981">
    <property type="taxonomic scope" value="Archaea"/>
</dbReference>
<dbReference type="HOGENOM" id="CLU_043736_0_1_2"/>
<dbReference type="OrthoDB" id="7429at2157"/>
<dbReference type="Proteomes" id="UP000001694">
    <property type="component" value="Chromosome"/>
</dbReference>
<dbReference type="GO" id="GO:0097550">
    <property type="term" value="C:transcription preinitiation complex"/>
    <property type="evidence" value="ECO:0007669"/>
    <property type="project" value="TreeGrafter"/>
</dbReference>
<dbReference type="GO" id="GO:0003700">
    <property type="term" value="F:DNA-binding transcription factor activity"/>
    <property type="evidence" value="ECO:0007669"/>
    <property type="project" value="UniProtKB-UniRule"/>
</dbReference>
<dbReference type="GO" id="GO:0017025">
    <property type="term" value="F:TBP-class protein binding"/>
    <property type="evidence" value="ECO:0007669"/>
    <property type="project" value="InterPro"/>
</dbReference>
<dbReference type="GO" id="GO:0008270">
    <property type="term" value="F:zinc ion binding"/>
    <property type="evidence" value="ECO:0007669"/>
    <property type="project" value="UniProtKB-UniRule"/>
</dbReference>
<dbReference type="GO" id="GO:0070897">
    <property type="term" value="P:transcription preinitiation complex assembly"/>
    <property type="evidence" value="ECO:0007669"/>
    <property type="project" value="InterPro"/>
</dbReference>
<dbReference type="CDD" id="cd20549">
    <property type="entry name" value="CYCLIN_TFIIB_archaea_like_rpt1"/>
    <property type="match status" value="1"/>
</dbReference>
<dbReference type="CDD" id="cd20550">
    <property type="entry name" value="CYCLIN_TFIIB_archaea_like_rpt2"/>
    <property type="match status" value="1"/>
</dbReference>
<dbReference type="FunFam" id="1.10.472.10:FF:000023">
    <property type="entry name" value="Transcription initiation factor IIB"/>
    <property type="match status" value="1"/>
</dbReference>
<dbReference type="FunFam" id="1.10.472.170:FF:000001">
    <property type="entry name" value="Transcription initiation factor IIB"/>
    <property type="match status" value="1"/>
</dbReference>
<dbReference type="Gene3D" id="1.10.472.170">
    <property type="match status" value="1"/>
</dbReference>
<dbReference type="Gene3D" id="1.10.472.10">
    <property type="entry name" value="Cyclin-like"/>
    <property type="match status" value="1"/>
</dbReference>
<dbReference type="HAMAP" id="MF_00383">
    <property type="entry name" value="TF2B_arch"/>
    <property type="match status" value="1"/>
</dbReference>
<dbReference type="InterPro" id="IPR013763">
    <property type="entry name" value="Cyclin-like_dom"/>
</dbReference>
<dbReference type="InterPro" id="IPR036915">
    <property type="entry name" value="Cyclin-like_sf"/>
</dbReference>
<dbReference type="InterPro" id="IPR000812">
    <property type="entry name" value="TFIIB"/>
</dbReference>
<dbReference type="InterPro" id="IPR023484">
    <property type="entry name" value="TFIIB_arc"/>
</dbReference>
<dbReference type="InterPro" id="IPR023486">
    <property type="entry name" value="TFIIB_CS"/>
</dbReference>
<dbReference type="InterPro" id="IPR013150">
    <property type="entry name" value="TFIIB_cyclin"/>
</dbReference>
<dbReference type="InterPro" id="IPR013137">
    <property type="entry name" value="Znf_TFIIB"/>
</dbReference>
<dbReference type="NCBIfam" id="NF001658">
    <property type="entry name" value="PRK00423.1"/>
    <property type="match status" value="1"/>
</dbReference>
<dbReference type="PANTHER" id="PTHR11618:SF13">
    <property type="entry name" value="TRANSCRIPTION INITIATION FACTOR IIB"/>
    <property type="match status" value="1"/>
</dbReference>
<dbReference type="PANTHER" id="PTHR11618">
    <property type="entry name" value="TRANSCRIPTION INITIATION FACTOR IIB-RELATED"/>
    <property type="match status" value="1"/>
</dbReference>
<dbReference type="Pfam" id="PF00382">
    <property type="entry name" value="TFIIB"/>
    <property type="match status" value="2"/>
</dbReference>
<dbReference type="Pfam" id="PF08271">
    <property type="entry name" value="Zn_Ribbon_TF"/>
    <property type="match status" value="1"/>
</dbReference>
<dbReference type="PRINTS" id="PR00685">
    <property type="entry name" value="TIFACTORIIB"/>
</dbReference>
<dbReference type="SMART" id="SM00385">
    <property type="entry name" value="CYCLIN"/>
    <property type="match status" value="2"/>
</dbReference>
<dbReference type="SUPFAM" id="SSF47954">
    <property type="entry name" value="Cyclin-like"/>
    <property type="match status" value="2"/>
</dbReference>
<dbReference type="SUPFAM" id="SSF57783">
    <property type="entry name" value="Zinc beta-ribbon"/>
    <property type="match status" value="1"/>
</dbReference>
<dbReference type="PROSITE" id="PS00782">
    <property type="entry name" value="TFIIB"/>
    <property type="match status" value="2"/>
</dbReference>
<dbReference type="PROSITE" id="PS51134">
    <property type="entry name" value="ZF_TFIIB"/>
    <property type="match status" value="1"/>
</dbReference>
<name>TF2B_PYRNV</name>
<comment type="function">
    <text evidence="1">Stabilizes TBP binding to an archaeal box-A promoter. Also responsible for recruiting RNA polymerase II to the pre-initiation complex (DNA-TBP-TFIIB).</text>
</comment>
<comment type="similarity">
    <text evidence="1">Belongs to the TFIIB family.</text>
</comment>
<accession>B1YCX0</accession>
<proteinExistence type="inferred from homology"/>
<protein>
    <recommendedName>
        <fullName evidence="1">Transcription initiation factor IIB</fullName>
        <shortName evidence="1">TFIIB</shortName>
    </recommendedName>
</protein>
<gene>
    <name evidence="1" type="primary">tfb</name>
    <name type="ordered locus">Tneu_0694</name>
</gene>
<feature type="chain" id="PRO_1000122401" description="Transcription initiation factor IIB">
    <location>
        <begin position="1"/>
        <end position="333"/>
    </location>
</feature>
<feature type="repeat" description="1">
    <location>
        <begin position="149"/>
        <end position="232"/>
    </location>
</feature>
<feature type="repeat" description="2">
    <location>
        <begin position="243"/>
        <end position="324"/>
    </location>
</feature>
<feature type="zinc finger region" description="TFIIB-type" evidence="2">
    <location>
        <begin position="33"/>
        <end position="64"/>
    </location>
</feature>
<feature type="binding site" evidence="2">
    <location>
        <position position="37"/>
    </location>
    <ligand>
        <name>Zn(2+)</name>
        <dbReference type="ChEBI" id="CHEBI:29105"/>
    </ligand>
</feature>
<feature type="binding site" evidence="2">
    <location>
        <position position="40"/>
    </location>
    <ligand>
        <name>Zn(2+)</name>
        <dbReference type="ChEBI" id="CHEBI:29105"/>
    </ligand>
</feature>
<feature type="binding site" evidence="2">
    <location>
        <position position="56"/>
    </location>
    <ligand>
        <name>Zn(2+)</name>
        <dbReference type="ChEBI" id="CHEBI:29105"/>
    </ligand>
</feature>
<feature type="binding site" evidence="2">
    <location>
        <position position="59"/>
    </location>
    <ligand>
        <name>Zn(2+)</name>
        <dbReference type="ChEBI" id="CHEBI:29105"/>
    </ligand>
</feature>
<reference key="1">
    <citation type="submission" date="2008-03" db="EMBL/GenBank/DDBJ databases">
        <title>Complete sequence of Thermoproteus neutrophilus V24Sta.</title>
        <authorList>
            <consortium name="US DOE Joint Genome Institute"/>
            <person name="Copeland A."/>
            <person name="Lucas S."/>
            <person name="Lapidus A."/>
            <person name="Glavina del Rio T."/>
            <person name="Dalin E."/>
            <person name="Tice H."/>
            <person name="Bruce D."/>
            <person name="Goodwin L."/>
            <person name="Pitluck S."/>
            <person name="Sims D."/>
            <person name="Brettin T."/>
            <person name="Detter J.C."/>
            <person name="Han C."/>
            <person name="Kuske C.R."/>
            <person name="Schmutz J."/>
            <person name="Larimer F."/>
            <person name="Land M."/>
            <person name="Hauser L."/>
            <person name="Kyrpides N."/>
            <person name="Mikhailova N."/>
            <person name="Biddle J.F."/>
            <person name="Zhang Z."/>
            <person name="Fitz-Gibbon S.T."/>
            <person name="Lowe T.M."/>
            <person name="Saltikov C."/>
            <person name="House C.H."/>
            <person name="Richardson P."/>
        </authorList>
    </citation>
    <scope>NUCLEOTIDE SEQUENCE [LARGE SCALE GENOMIC DNA]</scope>
    <source>
        <strain>DSM 2338 / JCM 9278 / NBRC 100436 / V24Sta</strain>
    </source>
</reference>
<keyword id="KW-0479">Metal-binding</keyword>
<keyword id="KW-0677">Repeat</keyword>
<keyword id="KW-0804">Transcription</keyword>
<keyword id="KW-0805">Transcription regulation</keyword>
<keyword id="KW-0862">Zinc</keyword>
<keyword id="KW-0863">Zinc-finger</keyword>
<evidence type="ECO:0000255" key="1">
    <source>
        <dbReference type="HAMAP-Rule" id="MF_00383"/>
    </source>
</evidence>
<evidence type="ECO:0000255" key="2">
    <source>
        <dbReference type="PROSITE-ProRule" id="PRU00469"/>
    </source>
</evidence>
<organism>
    <name type="scientific">Pyrobaculum neutrophilum (strain DSM 2338 / JCM 9278 / NBRC 100436 / V24Sta)</name>
    <name type="common">Thermoproteus neutrophilus</name>
    <dbReference type="NCBI Taxonomy" id="444157"/>
    <lineage>
        <taxon>Archaea</taxon>
        <taxon>Thermoproteota</taxon>
        <taxon>Thermoprotei</taxon>
        <taxon>Thermoproteales</taxon>
        <taxon>Thermoproteaceae</taxon>
        <taxon>Pyrobaculum</taxon>
    </lineage>
</organism>
<sequence>MTSPNPPSSGKPLKLRINRDSEGYLSLVTDTGEVYRCPICGNDKFIYNYERGEVVCIVCGAVVQEQLLDLGPEWRAFTSEERGQRARTGAPLTRLISEALTTVIDWRDKDVSGKELDIKRKLEVIRLRKWQTRARVQTSYERNFIQAAQELERLRSSMGIPRPCIEQALEIYRQALEKELVRGRSVEAMAAAALYMACRMMKMPRPLDELVRYTKASRREVARCYRLLLRELNVKVPISDPTLYISRIAEQLKLSGEVVKTAIDILQKAKKAGITAGKDPAGLAAAAVYIASLMHGDNRTQKDFAVAAGVTEVTVRNRYKELAKALNIKVPVK</sequence>